<organism>
    <name type="scientific">Mycobacterium tuberculosis (strain CDC 1551 / Oshkosh)</name>
    <dbReference type="NCBI Taxonomy" id="83331"/>
    <lineage>
        <taxon>Bacteria</taxon>
        <taxon>Bacillati</taxon>
        <taxon>Actinomycetota</taxon>
        <taxon>Actinomycetes</taxon>
        <taxon>Mycobacteriales</taxon>
        <taxon>Mycobacteriaceae</taxon>
        <taxon>Mycobacterium</taxon>
        <taxon>Mycobacterium tuberculosis complex</taxon>
    </lineage>
</organism>
<proteinExistence type="predicted"/>
<name>Y2085_MYCTO</name>
<feature type="chain" id="PRO_0000427466" description="Uncharacterized protein MT2147">
    <location>
        <begin position="1"/>
        <end position="101"/>
    </location>
</feature>
<gene>
    <name type="ordered locus">MT2147</name>
</gene>
<reference key="1">
    <citation type="journal article" date="2002" name="J. Bacteriol.">
        <title>Whole-genome comparison of Mycobacterium tuberculosis clinical and laboratory strains.</title>
        <authorList>
            <person name="Fleischmann R.D."/>
            <person name="Alland D."/>
            <person name="Eisen J.A."/>
            <person name="Carpenter L."/>
            <person name="White O."/>
            <person name="Peterson J.D."/>
            <person name="DeBoy R.T."/>
            <person name="Dodson R.J."/>
            <person name="Gwinn M.L."/>
            <person name="Haft D.H."/>
            <person name="Hickey E.K."/>
            <person name="Kolonay J.F."/>
            <person name="Nelson W.C."/>
            <person name="Umayam L.A."/>
            <person name="Ermolaeva M.D."/>
            <person name="Salzberg S.L."/>
            <person name="Delcher A."/>
            <person name="Utterback T.R."/>
            <person name="Weidman J.F."/>
            <person name="Khouri H.M."/>
            <person name="Gill J."/>
            <person name="Mikula A."/>
            <person name="Bishai W."/>
            <person name="Jacobs W.R. Jr."/>
            <person name="Venter J.C."/>
            <person name="Fraser C.M."/>
        </authorList>
    </citation>
    <scope>NUCLEOTIDE SEQUENCE [LARGE SCALE GENOMIC DNA]</scope>
    <source>
        <strain>CDC 1551 / Oshkosh</strain>
    </source>
</reference>
<accession>P9WLJ8</accession>
<accession>L0TBB8</accession>
<accession>P64935</accession>
<accession>Q10693</accession>
<keyword id="KW-1185">Reference proteome</keyword>
<dbReference type="EMBL" id="AE000516">
    <property type="protein sequence ID" value="AAK46429.1"/>
    <property type="molecule type" value="Genomic_DNA"/>
</dbReference>
<dbReference type="PIR" id="H70766">
    <property type="entry name" value="H70766"/>
</dbReference>
<dbReference type="KEGG" id="mtc:MT2147"/>
<dbReference type="PATRIC" id="fig|83331.31.peg.2316"/>
<dbReference type="HOGENOM" id="CLU_2288375_0_0_11"/>
<dbReference type="Proteomes" id="UP000001020">
    <property type="component" value="Chromosome"/>
</dbReference>
<dbReference type="Gene3D" id="1.10.10.10">
    <property type="entry name" value="Winged helix-like DNA-binding domain superfamily/Winged helix DNA-binding domain"/>
    <property type="match status" value="1"/>
</dbReference>
<dbReference type="InterPro" id="IPR036388">
    <property type="entry name" value="WH-like_DNA-bd_sf"/>
</dbReference>
<protein>
    <recommendedName>
        <fullName>Uncharacterized protein MT2147</fullName>
    </recommendedName>
</protein>
<sequence length="101" mass="10960">MSDMCDVVSFVGAAERVLRARFRPSPESGPPVHARRCGWSLGISAETLRRWAGQAEVDSGVVAGVSASRSGSVKTSELEQTIEILKVATSFFARKCDPRHR</sequence>